<accession>C5H8J1</accession>
<accession>Q9SIF0</accession>
<name>EME1B_ARATH</name>
<dbReference type="EC" id="3.1.22.-"/>
<dbReference type="EMBL" id="FJ161970">
    <property type="protein sequence ID" value="ACN24999.1"/>
    <property type="molecule type" value="mRNA"/>
</dbReference>
<dbReference type="EMBL" id="AC007168">
    <property type="protein sequence ID" value="AAD23625.1"/>
    <property type="status" value="ALT_SEQ"/>
    <property type="molecule type" value="Genomic_DNA"/>
</dbReference>
<dbReference type="EMBL" id="CP002685">
    <property type="protein sequence ID" value="AEC07270.1"/>
    <property type="molecule type" value="Genomic_DNA"/>
</dbReference>
<dbReference type="PIR" id="D84609">
    <property type="entry name" value="D84609"/>
</dbReference>
<dbReference type="RefSeq" id="NP_179804.5">
    <property type="nucleotide sequence ID" value="NM_127782.6"/>
</dbReference>
<dbReference type="SMR" id="C5H8J1"/>
<dbReference type="FunCoup" id="C5H8J1">
    <property type="interactions" value="161"/>
</dbReference>
<dbReference type="STRING" id="3702.C5H8J1"/>
<dbReference type="iPTMnet" id="C5H8J1"/>
<dbReference type="PaxDb" id="3702-AT2G22140.1"/>
<dbReference type="ProteomicsDB" id="224420"/>
<dbReference type="EnsemblPlants" id="AT2G22140.1">
    <property type="protein sequence ID" value="AT2G22140.1"/>
    <property type="gene ID" value="AT2G22140"/>
</dbReference>
<dbReference type="GeneID" id="816748"/>
<dbReference type="Gramene" id="AT2G22140.1">
    <property type="protein sequence ID" value="AT2G22140.1"/>
    <property type="gene ID" value="AT2G22140"/>
</dbReference>
<dbReference type="KEGG" id="ath:AT2G22140"/>
<dbReference type="Araport" id="AT2G22140"/>
<dbReference type="TAIR" id="AT2G22140">
    <property type="gene designation" value="EME1B"/>
</dbReference>
<dbReference type="eggNOG" id="ENOG502QV6A">
    <property type="taxonomic scope" value="Eukaryota"/>
</dbReference>
<dbReference type="HOGENOM" id="CLU_022160_1_0_1"/>
<dbReference type="InParanoid" id="C5H8J1"/>
<dbReference type="PhylomeDB" id="C5H8J1"/>
<dbReference type="PRO" id="PR:C5H8J1"/>
<dbReference type="Proteomes" id="UP000006548">
    <property type="component" value="Chromosome 2"/>
</dbReference>
<dbReference type="ExpressionAtlas" id="C5H8J1">
    <property type="expression patterns" value="baseline and differential"/>
</dbReference>
<dbReference type="GO" id="GO:0048476">
    <property type="term" value="C:Holliday junction resolvase complex"/>
    <property type="evidence" value="ECO:0007669"/>
    <property type="project" value="InterPro"/>
</dbReference>
<dbReference type="GO" id="GO:0005634">
    <property type="term" value="C:nucleus"/>
    <property type="evidence" value="ECO:0007669"/>
    <property type="project" value="UniProtKB-SubCell"/>
</dbReference>
<dbReference type="GO" id="GO:0003677">
    <property type="term" value="F:DNA binding"/>
    <property type="evidence" value="ECO:0007669"/>
    <property type="project" value="InterPro"/>
</dbReference>
<dbReference type="GO" id="GO:0004519">
    <property type="term" value="F:endonuclease activity"/>
    <property type="evidence" value="ECO:0000314"/>
    <property type="project" value="TAIR"/>
</dbReference>
<dbReference type="GO" id="GO:0046872">
    <property type="term" value="F:metal ion binding"/>
    <property type="evidence" value="ECO:0007669"/>
    <property type="project" value="UniProtKB-KW"/>
</dbReference>
<dbReference type="GO" id="GO:0051301">
    <property type="term" value="P:cell division"/>
    <property type="evidence" value="ECO:0007669"/>
    <property type="project" value="UniProtKB-KW"/>
</dbReference>
<dbReference type="GO" id="GO:0006310">
    <property type="term" value="P:DNA recombination"/>
    <property type="evidence" value="ECO:0000314"/>
    <property type="project" value="TAIR"/>
</dbReference>
<dbReference type="GO" id="GO:0006281">
    <property type="term" value="P:DNA repair"/>
    <property type="evidence" value="ECO:0000314"/>
    <property type="project" value="TAIR"/>
</dbReference>
<dbReference type="GO" id="GO:0051321">
    <property type="term" value="P:meiotic cell cycle"/>
    <property type="evidence" value="ECO:0007669"/>
    <property type="project" value="UniProtKB-KW"/>
</dbReference>
<dbReference type="CDD" id="cd20083">
    <property type="entry name" value="XPF_nuclease_EME"/>
    <property type="match status" value="1"/>
</dbReference>
<dbReference type="FunFam" id="3.40.50.10130:FF:000013">
    <property type="entry name" value="Crossover junction endonuclease EME1"/>
    <property type="match status" value="1"/>
</dbReference>
<dbReference type="FunFam" id="1.10.150.670:FF:000007">
    <property type="entry name" value="Crossover junction endonuclease EME1B"/>
    <property type="match status" value="1"/>
</dbReference>
<dbReference type="Gene3D" id="3.40.50.10130">
    <property type="match status" value="1"/>
</dbReference>
<dbReference type="Gene3D" id="1.10.150.670">
    <property type="entry name" value="Crossover junction endonuclease EME1, DNA-binding domain"/>
    <property type="match status" value="1"/>
</dbReference>
<dbReference type="InterPro" id="IPR042530">
    <property type="entry name" value="EME1/EME2_C"/>
</dbReference>
<dbReference type="InterPro" id="IPR006166">
    <property type="entry name" value="ERCC4_domain"/>
</dbReference>
<dbReference type="InterPro" id="IPR033310">
    <property type="entry name" value="Mms4/EME1/EME2"/>
</dbReference>
<dbReference type="InterPro" id="IPR047524">
    <property type="entry name" value="XPF_nuclease_EME1_plant/arthr"/>
</dbReference>
<dbReference type="PANTHER" id="PTHR21077:SF5">
    <property type="entry name" value="CROSSOVER JUNCTION ENDONUCLEASE MMS4"/>
    <property type="match status" value="1"/>
</dbReference>
<dbReference type="PANTHER" id="PTHR21077">
    <property type="entry name" value="EME1 PROTEIN"/>
    <property type="match status" value="1"/>
</dbReference>
<dbReference type="Pfam" id="PF21292">
    <property type="entry name" value="EME1-MUS81_C"/>
    <property type="match status" value="1"/>
</dbReference>
<dbReference type="Pfam" id="PF02732">
    <property type="entry name" value="ERCC4"/>
    <property type="match status" value="1"/>
</dbReference>
<dbReference type="SMART" id="SM00891">
    <property type="entry name" value="ERCC4"/>
    <property type="match status" value="1"/>
</dbReference>
<keyword id="KW-0106">Calcium</keyword>
<keyword id="KW-0131">Cell cycle</keyword>
<keyword id="KW-0132">Cell division</keyword>
<keyword id="KW-0175">Coiled coil</keyword>
<keyword id="KW-0227">DNA damage</keyword>
<keyword id="KW-0233">DNA recombination</keyword>
<keyword id="KW-0234">DNA repair</keyword>
<keyword id="KW-0255">Endonuclease</keyword>
<keyword id="KW-0378">Hydrolase</keyword>
<keyword id="KW-0460">Magnesium</keyword>
<keyword id="KW-0469">Meiosis</keyword>
<keyword id="KW-0479">Metal-binding</keyword>
<keyword id="KW-0498">Mitosis</keyword>
<keyword id="KW-0540">Nuclease</keyword>
<keyword id="KW-0539">Nucleus</keyword>
<keyword id="KW-1185">Reference proteome</keyword>
<comment type="function">
    <text evidence="3">Interacts with MUS81 to form a DNA structure-specific endonuclease with substrate preference for branched DNA structures with a 5'-end at the branch nick. Typical substrates include 3'-flap structures, D-loops, replication forks, nicked Holliday junctions and also intact Holliday junctions with a reduced efficiency. May be required in mitosis for the processing of stalled or collapsed replication fork intermediates. Plays a role in DNA repair and in genotoxic stress-induced homologous recombination (HR) in somatic cells. Mediates a subset of meiotic recombination events that are insensitive to crossover interference.</text>
</comment>
<comment type="cofactor">
    <cofactor evidence="4">
        <name>Mg(2+)</name>
        <dbReference type="ChEBI" id="CHEBI:18420"/>
    </cofactor>
    <cofactor evidence="4">
        <name>Ca(2+)</name>
        <dbReference type="ChEBI" id="CHEBI:29108"/>
    </cofactor>
</comment>
<comment type="subunit">
    <text>Forms a heterodimer with MUS81.</text>
</comment>
<comment type="subcellular location">
    <subcellularLocation>
        <location evidence="4">Nucleus</location>
    </subcellularLocation>
</comment>
<comment type="similarity">
    <text evidence="4">Belongs to the EME1/MMS4 family.</text>
</comment>
<comment type="sequence caution" evidence="4">
    <conflict type="erroneous gene model prediction">
        <sequence resource="EMBL-CDS" id="AAD23625"/>
    </conflict>
</comment>
<proteinExistence type="evidence at protein level"/>
<organism>
    <name type="scientific">Arabidopsis thaliana</name>
    <name type="common">Mouse-ear cress</name>
    <dbReference type="NCBI Taxonomy" id="3702"/>
    <lineage>
        <taxon>Eukaryota</taxon>
        <taxon>Viridiplantae</taxon>
        <taxon>Streptophyta</taxon>
        <taxon>Embryophyta</taxon>
        <taxon>Tracheophyta</taxon>
        <taxon>Spermatophyta</taxon>
        <taxon>Magnoliopsida</taxon>
        <taxon>eudicotyledons</taxon>
        <taxon>Gunneridae</taxon>
        <taxon>Pentapetalae</taxon>
        <taxon>rosids</taxon>
        <taxon>malvids</taxon>
        <taxon>Brassicales</taxon>
        <taxon>Brassicaceae</taxon>
        <taxon>Camelineae</taxon>
        <taxon>Arabidopsis</taxon>
    </lineage>
</organism>
<reference key="1">
    <citation type="journal article" date="2009" name="Plant Physiol.">
        <title>Two distinct MUS81-EME1 complexes from Arabidopsis process Holliday junctions.</title>
        <authorList>
            <person name="Geuting V."/>
            <person name="Kobbe D."/>
            <person name="Hartung F."/>
            <person name="Duerr J."/>
            <person name="Focke M."/>
            <person name="Puchta H."/>
        </authorList>
    </citation>
    <scope>NUCLEOTIDE SEQUENCE [MRNA]</scope>
    <scope>FUNCTION</scope>
    <scope>INTERACTION WITH MUS81</scope>
    <source>
        <strain>cv. Columbia</strain>
    </source>
</reference>
<reference key="2">
    <citation type="journal article" date="1999" name="Nature">
        <title>Sequence and analysis of chromosome 2 of the plant Arabidopsis thaliana.</title>
        <authorList>
            <person name="Lin X."/>
            <person name="Kaul S."/>
            <person name="Rounsley S.D."/>
            <person name="Shea T.P."/>
            <person name="Benito M.-I."/>
            <person name="Town C.D."/>
            <person name="Fujii C.Y."/>
            <person name="Mason T.M."/>
            <person name="Bowman C.L."/>
            <person name="Barnstead M.E."/>
            <person name="Feldblyum T.V."/>
            <person name="Buell C.R."/>
            <person name="Ketchum K.A."/>
            <person name="Lee J.J."/>
            <person name="Ronning C.M."/>
            <person name="Koo H.L."/>
            <person name="Moffat K.S."/>
            <person name="Cronin L.A."/>
            <person name="Shen M."/>
            <person name="Pai G."/>
            <person name="Van Aken S."/>
            <person name="Umayam L."/>
            <person name="Tallon L.J."/>
            <person name="Gill J.E."/>
            <person name="Adams M.D."/>
            <person name="Carrera A.J."/>
            <person name="Creasy T.H."/>
            <person name="Goodman H.M."/>
            <person name="Somerville C.R."/>
            <person name="Copenhaver G.P."/>
            <person name="Preuss D."/>
            <person name="Nierman W.C."/>
            <person name="White O."/>
            <person name="Eisen J.A."/>
            <person name="Salzberg S.L."/>
            <person name="Fraser C.M."/>
            <person name="Venter J.C."/>
        </authorList>
    </citation>
    <scope>NUCLEOTIDE SEQUENCE [LARGE SCALE GENOMIC DNA]</scope>
    <source>
        <strain>cv. Columbia</strain>
    </source>
</reference>
<reference key="3">
    <citation type="journal article" date="2017" name="Plant J.">
        <title>Araport11: a complete reannotation of the Arabidopsis thaliana reference genome.</title>
        <authorList>
            <person name="Cheng C.Y."/>
            <person name="Krishnakumar V."/>
            <person name="Chan A.P."/>
            <person name="Thibaud-Nissen F."/>
            <person name="Schobel S."/>
            <person name="Town C.D."/>
        </authorList>
    </citation>
    <scope>GENOME REANNOTATION</scope>
    <source>
        <strain>cv. Columbia</strain>
    </source>
</reference>
<feature type="chain" id="PRO_0000418428" description="Crossover junction endonuclease EME1B">
    <location>
        <begin position="1"/>
        <end position="551"/>
    </location>
</feature>
<feature type="domain" description="ERCC4">
    <location>
        <begin position="287"/>
        <end position="484"/>
    </location>
</feature>
<feature type="region of interest" description="Disordered" evidence="2">
    <location>
        <begin position="1"/>
        <end position="55"/>
    </location>
</feature>
<feature type="region of interest" description="Disordered" evidence="2">
    <location>
        <begin position="187"/>
        <end position="239"/>
    </location>
</feature>
<feature type="coiled-coil region" evidence="1">
    <location>
        <begin position="203"/>
        <end position="253"/>
    </location>
</feature>
<feature type="compositionally biased region" description="Polar residues" evidence="2">
    <location>
        <begin position="37"/>
        <end position="51"/>
    </location>
</feature>
<feature type="compositionally biased region" description="Basic and acidic residues" evidence="2">
    <location>
        <begin position="202"/>
        <end position="239"/>
    </location>
</feature>
<evidence type="ECO:0000255" key="1"/>
<evidence type="ECO:0000256" key="2">
    <source>
        <dbReference type="SAM" id="MobiDB-lite"/>
    </source>
</evidence>
<evidence type="ECO:0000269" key="3">
    <source>
    </source>
</evidence>
<evidence type="ECO:0000305" key="4"/>
<protein>
    <recommendedName>
        <fullName>Crossover junction endonuclease EME1B</fullName>
        <ecNumber>3.1.22.-</ecNumber>
    </recommendedName>
    <alternativeName>
        <fullName>Essential meiotic endonuclease 1B</fullName>
        <shortName>AtEME1B</shortName>
    </alternativeName>
</protein>
<gene>
    <name type="primary">EME1B</name>
    <name type="ordered locus">At2g22140</name>
    <name type="ORF">T26C19.20</name>
</gene>
<sequence>MNDHILISDGEDQTTPLPSLSKRARKYPISAILISDSDPTPQKQPPESSFTPIFVPETPLSDDFSVVKCSFGSRALASNREDKFSGKRIISLDSEFEDSPRPETSKKNESVLAGLREPRFGLEAETSEAYYKNTRIPETNLDDDTSWMHEVSFRSSPTNDTIEVVSDQEKEDISVEKIGRKKKIRTTTLPVPGEALPKKRQSKEDKTSAMEEKKLRKEQERLEKAASKAEEAERKRLEKEKKKWEKGKLALKSIVAEIDTKVLEGSIGGLLLSRFSEKGITIHVGPNPIERSIVWTMTIPEDIAPLFPQGPKIPYLLLVYDAEEFCNLVANGKFLEIISRVQDRYPSYTVCCLTNKLMSYVKKREKEEYKNPGNWRRPPIDEVLAKLTTHYVKVHSRHCVDEAEVAEHIVGLTSSLASCQFRKKLTMLSVSANGALVSKDSVDKHLIKKSPWLKALVAIPKVQPRYALAVWKKYPSMKSLLKVYMDRNKSVHEKEFLLKDLKVEGLVGGDIRLGEICSKRIYRVLMSHDGAIKTDDVENGAAFFTDSPGVN</sequence>